<organism>
    <name type="scientific">Homo sapiens</name>
    <name type="common">Human</name>
    <dbReference type="NCBI Taxonomy" id="9606"/>
    <lineage>
        <taxon>Eukaryota</taxon>
        <taxon>Metazoa</taxon>
        <taxon>Chordata</taxon>
        <taxon>Craniata</taxon>
        <taxon>Vertebrata</taxon>
        <taxon>Euteleostomi</taxon>
        <taxon>Mammalia</taxon>
        <taxon>Eutheria</taxon>
        <taxon>Euarchontoglires</taxon>
        <taxon>Primates</taxon>
        <taxon>Haplorrhini</taxon>
        <taxon>Catarrhini</taxon>
        <taxon>Hominidae</taxon>
        <taxon>Homo</taxon>
    </lineage>
</organism>
<feature type="initiator methionine" description="Removed" evidence="11">
    <location>
        <position position="1"/>
    </location>
</feature>
<feature type="chain" id="PRO_0000071403" description="Serine/threonine-protein phosphatase 2A 65 kDa regulatory subunit A beta isoform">
    <location>
        <begin position="2"/>
        <end position="601"/>
    </location>
</feature>
<feature type="repeat" description="HEAT 1">
    <location>
        <begin position="20"/>
        <end position="58"/>
    </location>
</feature>
<feature type="repeat" description="HEAT 2">
    <location>
        <begin position="59"/>
        <end position="96"/>
    </location>
</feature>
<feature type="repeat" description="HEAT 3">
    <location>
        <begin position="97"/>
        <end position="135"/>
    </location>
</feature>
<feature type="repeat" description="HEAT 4">
    <location>
        <begin position="136"/>
        <end position="173"/>
    </location>
</feature>
<feature type="repeat" description="HEAT 5">
    <location>
        <begin position="174"/>
        <end position="212"/>
    </location>
</feature>
<feature type="repeat" description="HEAT 6">
    <location>
        <begin position="213"/>
        <end position="251"/>
    </location>
</feature>
<feature type="repeat" description="HEAT 7">
    <location>
        <begin position="252"/>
        <end position="290"/>
    </location>
</feature>
<feature type="repeat" description="HEAT 8">
    <location>
        <begin position="291"/>
        <end position="333"/>
    </location>
</feature>
<feature type="repeat" description="HEAT 9">
    <location>
        <begin position="334"/>
        <end position="372"/>
    </location>
</feature>
<feature type="repeat" description="HEAT 10">
    <location>
        <begin position="373"/>
        <end position="411"/>
    </location>
</feature>
<feature type="repeat" description="HEAT 11">
    <location>
        <begin position="412"/>
        <end position="450"/>
    </location>
</feature>
<feature type="repeat" description="HEAT 12">
    <location>
        <begin position="451"/>
        <end position="489"/>
    </location>
</feature>
<feature type="repeat" description="HEAT 13">
    <location>
        <begin position="490"/>
        <end position="528"/>
    </location>
</feature>
<feature type="repeat" description="HEAT 14">
    <location>
        <begin position="529"/>
        <end position="567"/>
    </location>
</feature>
<feature type="repeat" description="HEAT 15">
    <location>
        <begin position="568"/>
        <end position="601"/>
    </location>
</feature>
<feature type="modified residue" description="N-acetylalanine" evidence="11">
    <location>
        <position position="2"/>
    </location>
</feature>
<feature type="splice variant" id="VSP_043379" description="In isoform 3." evidence="8">
    <location>
        <begin position="39"/>
        <end position="102"/>
    </location>
</feature>
<feature type="splice variant" id="VSP_046684" description="In isoform 5." evidence="8">
    <location>
        <begin position="103"/>
        <end position="229"/>
    </location>
</feature>
<feature type="splice variant" id="VSP_045275" description="In isoform 4." evidence="8">
    <location>
        <begin position="344"/>
        <end position="388"/>
    </location>
</feature>
<feature type="splice variant" id="VSP_036460" description="In isoform 2 and isoform 3." evidence="8 9">
    <original>LALA</original>
    <variation>VAQRLRKLEFPVKDSGEPSVPRADKNHFPRPTVPGEDMGKGPVYQLRGDTRDTLAQLGIAELVHFSQSTD</variation>
    <location>
        <begin position="598"/>
        <end position="601"/>
    </location>
</feature>
<feature type="sequence variant" id="VAR_022895" description="In a lung cancer patient; dbSNP:rs142771326." evidence="7">
    <original>G</original>
    <variation>R</variation>
    <location>
        <position position="8"/>
    </location>
</feature>
<feature type="sequence variant" id="VAR_022896" description="In a colorectal cancer patient." evidence="3">
    <original>G</original>
    <variation>A</variation>
    <location>
        <position position="15"/>
    </location>
</feature>
<feature type="sequence variant" id="VAR_022897" description="In a lung cancer patient." evidence="7">
    <original>P</original>
    <variation>S</variation>
    <location>
        <position position="65"/>
    </location>
</feature>
<feature type="sequence variant" id="VAR_006384" description="In a lung cancer patient; dbSNP:rs1805076." evidence="1 4 7">
    <original>G</original>
    <variation>D</variation>
    <location>
        <position position="90"/>
    </location>
</feature>
<feature type="sequence variant" id="VAR_022898" description="In a colon adenocarcinoma." evidence="7">
    <original>L</original>
    <variation>P</variation>
    <location>
        <position position="101"/>
    </location>
</feature>
<feature type="sequence variant" id="VAR_022899" description="In a lung cancer patient." evidence="7">
    <original>K</original>
    <variation>E</variation>
    <location>
        <position position="343"/>
    </location>
</feature>
<feature type="sequence variant" id="VAR_022900" description="In a colorectal cancer patient; dbSNP:rs1442893893." evidence="3">
    <original>S</original>
    <variation>P</variation>
    <location>
        <position position="365"/>
    </location>
</feature>
<feature type="sequence variant" id="VAR_022901" description="In a colon adenocarcinoma." evidence="7">
    <original>V</original>
    <variation>A</variation>
    <location>
        <position position="448"/>
    </location>
</feature>
<feature type="sequence variant" id="VAR_022902" description="In a colorectal cancer patient." evidence="3">
    <original>V</original>
    <variation>E</variation>
    <location>
        <position position="498"/>
    </location>
</feature>
<feature type="sequence variant" id="VAR_022903" description="In a colorectal cancer patient." evidence="3">
    <original>L</original>
    <variation>I</variation>
    <location>
        <position position="499"/>
    </location>
</feature>
<feature type="sequence variant" id="VAR_022904" description="In a colorectal cancer patient." evidence="3">
    <original>V</original>
    <variation>G</variation>
    <location>
        <position position="500"/>
    </location>
</feature>
<feature type="sequence variant" id="VAR_022905" description="In a lung cancer patient; dbSNP:rs973682124." evidence="7">
    <original>D</original>
    <variation>G</variation>
    <location>
        <position position="504"/>
    </location>
</feature>
<feature type="sequence variant" id="VAR_022906" description="In a colon adenocarcinoma; dbSNP:rs1318084062." evidence="7">
    <original>V</original>
    <variation>A</variation>
    <location>
        <position position="545"/>
    </location>
</feature>
<feature type="sequence conflict" description="In Ref. 9; AAA59983." evidence="10" ref="9">
    <original>E</original>
    <variation>V</variation>
    <location>
        <position position="74"/>
    </location>
</feature>
<feature type="sequence conflict" description="In Ref. 1; AAC63525, 3; AAG39644 and 9; AAA59983." evidence="10" ref="1 3 9">
    <original>I</original>
    <variation>T</variation>
    <location>
        <position position="178"/>
    </location>
</feature>
<feature type="sequence conflict" description="In Ref. 4; BAG57867." evidence="10" ref="4">
    <original>D</original>
    <variation>G</variation>
    <location>
        <position position="211"/>
    </location>
</feature>
<feature type="sequence conflict" description="In Ref. 9; AAA59983." evidence="10" ref="9">
    <original>Q</original>
    <variation>R</variation>
    <location>
        <position position="411"/>
    </location>
</feature>
<feature type="sequence conflict" description="In Ref. 4; BAG57867." evidence="10" ref="4">
    <original>N</original>
    <variation>S</variation>
    <location>
        <position position="503"/>
    </location>
</feature>
<dbReference type="EMBL" id="AF083439">
    <property type="protein sequence ID" value="AAC63525.1"/>
    <property type="molecule type" value="Genomic_DNA"/>
</dbReference>
<dbReference type="EMBL" id="AF083425">
    <property type="protein sequence ID" value="AAC63525.1"/>
    <property type="status" value="JOINED"/>
    <property type="molecule type" value="Genomic_DNA"/>
</dbReference>
<dbReference type="EMBL" id="AF083426">
    <property type="protein sequence ID" value="AAC63525.1"/>
    <property type="status" value="JOINED"/>
    <property type="molecule type" value="Genomic_DNA"/>
</dbReference>
<dbReference type="EMBL" id="AF083427">
    <property type="protein sequence ID" value="AAC63525.1"/>
    <property type="status" value="JOINED"/>
    <property type="molecule type" value="Genomic_DNA"/>
</dbReference>
<dbReference type="EMBL" id="AF083428">
    <property type="protein sequence ID" value="AAC63525.1"/>
    <property type="status" value="JOINED"/>
    <property type="molecule type" value="Genomic_DNA"/>
</dbReference>
<dbReference type="EMBL" id="AF083429">
    <property type="protein sequence ID" value="AAC63525.1"/>
    <property type="status" value="JOINED"/>
    <property type="molecule type" value="Genomic_DNA"/>
</dbReference>
<dbReference type="EMBL" id="AF083430">
    <property type="protein sequence ID" value="AAC63525.1"/>
    <property type="status" value="JOINED"/>
    <property type="molecule type" value="Genomic_DNA"/>
</dbReference>
<dbReference type="EMBL" id="AF083431">
    <property type="protein sequence ID" value="AAC63525.1"/>
    <property type="status" value="JOINED"/>
    <property type="molecule type" value="Genomic_DNA"/>
</dbReference>
<dbReference type="EMBL" id="AF083432">
    <property type="protein sequence ID" value="AAC63525.1"/>
    <property type="status" value="JOINED"/>
    <property type="molecule type" value="Genomic_DNA"/>
</dbReference>
<dbReference type="EMBL" id="AF083433">
    <property type="protein sequence ID" value="AAC63525.1"/>
    <property type="status" value="JOINED"/>
    <property type="molecule type" value="Genomic_DNA"/>
</dbReference>
<dbReference type="EMBL" id="AF083434">
    <property type="protein sequence ID" value="AAC63525.1"/>
    <property type="status" value="JOINED"/>
    <property type="molecule type" value="Genomic_DNA"/>
</dbReference>
<dbReference type="EMBL" id="AF083435">
    <property type="protein sequence ID" value="AAC63525.1"/>
    <property type="status" value="JOINED"/>
    <property type="molecule type" value="Genomic_DNA"/>
</dbReference>
<dbReference type="EMBL" id="AF083436">
    <property type="protein sequence ID" value="AAC63525.1"/>
    <property type="status" value="JOINED"/>
    <property type="molecule type" value="Genomic_DNA"/>
</dbReference>
<dbReference type="EMBL" id="AF083437">
    <property type="protein sequence ID" value="AAC63525.1"/>
    <property type="status" value="JOINED"/>
    <property type="molecule type" value="Genomic_DNA"/>
</dbReference>
<dbReference type="EMBL" id="AF083438">
    <property type="protein sequence ID" value="AAC63525.1"/>
    <property type="status" value="JOINED"/>
    <property type="molecule type" value="Genomic_DNA"/>
</dbReference>
<dbReference type="EMBL" id="AF087438">
    <property type="protein sequence ID" value="AAC69624.1"/>
    <property type="molecule type" value="mRNA"/>
</dbReference>
<dbReference type="EMBL" id="AF163473">
    <property type="protein sequence ID" value="AAG39644.1"/>
    <property type="molecule type" value="mRNA"/>
</dbReference>
<dbReference type="EMBL" id="AK294716">
    <property type="protein sequence ID" value="BAG57867.1"/>
    <property type="molecule type" value="mRNA"/>
</dbReference>
<dbReference type="EMBL" id="AK296455">
    <property type="protein sequence ID" value="BAG59103.1"/>
    <property type="status" value="ALT_FRAME"/>
    <property type="molecule type" value="mRNA"/>
</dbReference>
<dbReference type="EMBL" id="AK301705">
    <property type="protein sequence ID" value="BAG63177.1"/>
    <property type="molecule type" value="mRNA"/>
</dbReference>
<dbReference type="EMBL" id="EF445011">
    <property type="protein sequence ID" value="ACA06046.1"/>
    <property type="molecule type" value="Genomic_DNA"/>
</dbReference>
<dbReference type="EMBL" id="EF445011">
    <property type="protein sequence ID" value="ACA06047.1"/>
    <property type="molecule type" value="Genomic_DNA"/>
</dbReference>
<dbReference type="EMBL" id="AP000925">
    <property type="status" value="NOT_ANNOTATED_CDS"/>
    <property type="molecule type" value="Genomic_DNA"/>
</dbReference>
<dbReference type="EMBL" id="AP001781">
    <property type="status" value="NOT_ANNOTATED_CDS"/>
    <property type="molecule type" value="Genomic_DNA"/>
</dbReference>
<dbReference type="EMBL" id="CH471065">
    <property type="protein sequence ID" value="EAW67150.1"/>
    <property type="molecule type" value="Genomic_DNA"/>
</dbReference>
<dbReference type="EMBL" id="CH471065">
    <property type="protein sequence ID" value="EAW67151.1"/>
    <property type="molecule type" value="Genomic_DNA"/>
</dbReference>
<dbReference type="EMBL" id="BC027596">
    <property type="protein sequence ID" value="AAH27596.1"/>
    <property type="molecule type" value="mRNA"/>
</dbReference>
<dbReference type="EMBL" id="M65254">
    <property type="protein sequence ID" value="AAA59983.1"/>
    <property type="status" value="ALT_SEQ"/>
    <property type="molecule type" value="mRNA"/>
</dbReference>
<dbReference type="CCDS" id="CCDS53706.1">
    <molecule id="P30154-3"/>
</dbReference>
<dbReference type="CCDS" id="CCDS53707.1">
    <molecule id="P30154-5"/>
</dbReference>
<dbReference type="CCDS" id="CCDS53708.1">
    <molecule id="P30154-4"/>
</dbReference>
<dbReference type="CCDS" id="CCDS8348.1">
    <molecule id="P30154-2"/>
</dbReference>
<dbReference type="CCDS" id="CCDS8349.1">
    <molecule id="P30154-1"/>
</dbReference>
<dbReference type="PIR" id="B34541">
    <property type="entry name" value="B34541"/>
</dbReference>
<dbReference type="RefSeq" id="NP_001171033.1">
    <molecule id="P30154-4"/>
    <property type="nucleotide sequence ID" value="NM_001177562.2"/>
</dbReference>
<dbReference type="RefSeq" id="NP_001171034.1">
    <molecule id="P30154-5"/>
    <property type="nucleotide sequence ID" value="NM_001177563.2"/>
</dbReference>
<dbReference type="RefSeq" id="NP_002707.3">
    <molecule id="P30154-1"/>
    <property type="nucleotide sequence ID" value="NM_002716.4"/>
</dbReference>
<dbReference type="RefSeq" id="NP_859050.1">
    <molecule id="P30154-2"/>
    <property type="nucleotide sequence ID" value="NM_181699.3"/>
</dbReference>
<dbReference type="RefSeq" id="NP_859051.1">
    <molecule id="P30154-3"/>
    <property type="nucleotide sequence ID" value="NM_181700.2"/>
</dbReference>
<dbReference type="SMR" id="P30154"/>
<dbReference type="BioGRID" id="111511">
    <property type="interactions" value="199"/>
</dbReference>
<dbReference type="CORUM" id="P30154"/>
<dbReference type="DIP" id="DIP-36616N"/>
<dbReference type="FunCoup" id="P30154">
    <property type="interactions" value="2439"/>
</dbReference>
<dbReference type="IntAct" id="P30154">
    <property type="interactions" value="140"/>
</dbReference>
<dbReference type="MINT" id="P30154"/>
<dbReference type="STRING" id="9606.ENSP00000311344"/>
<dbReference type="GlyGen" id="P30154">
    <property type="glycosylation" value="1 site, 1 O-linked glycan (1 site)"/>
</dbReference>
<dbReference type="iPTMnet" id="P30154"/>
<dbReference type="MetOSite" id="P30154"/>
<dbReference type="PhosphoSitePlus" id="P30154"/>
<dbReference type="SwissPalm" id="P30154"/>
<dbReference type="BioMuta" id="PPP2R1B"/>
<dbReference type="DMDM" id="116241236"/>
<dbReference type="jPOST" id="P30154"/>
<dbReference type="MassIVE" id="P30154"/>
<dbReference type="PaxDb" id="9606-ENSP00000311344"/>
<dbReference type="PeptideAtlas" id="P30154"/>
<dbReference type="ProteomicsDB" id="2377"/>
<dbReference type="ProteomicsDB" id="30144"/>
<dbReference type="ProteomicsDB" id="54637"/>
<dbReference type="ProteomicsDB" id="54638">
    <molecule id="P30154-2"/>
</dbReference>
<dbReference type="ProteomicsDB" id="54639">
    <molecule id="P30154-3"/>
</dbReference>
<dbReference type="Pumba" id="P30154"/>
<dbReference type="Antibodypedia" id="3416">
    <property type="antibodies" value="302 antibodies from 36 providers"/>
</dbReference>
<dbReference type="DNASU" id="5519"/>
<dbReference type="Ensembl" id="ENST00000311129.9">
    <molecule id="P30154-2"/>
    <property type="protein sequence ID" value="ENSP00000311344.5"/>
    <property type="gene ID" value="ENSG00000137713.16"/>
</dbReference>
<dbReference type="Ensembl" id="ENST00000341980.10">
    <molecule id="P30154-4"/>
    <property type="protein sequence ID" value="ENSP00000343317.6"/>
    <property type="gene ID" value="ENSG00000137713.16"/>
</dbReference>
<dbReference type="Ensembl" id="ENST00000393055.6">
    <molecule id="P30154-5"/>
    <property type="protein sequence ID" value="ENSP00000376775.2"/>
    <property type="gene ID" value="ENSG00000137713.16"/>
</dbReference>
<dbReference type="Ensembl" id="ENST00000426998.6">
    <molecule id="P30154-3"/>
    <property type="protein sequence ID" value="ENSP00000410671.2"/>
    <property type="gene ID" value="ENSG00000137713.16"/>
</dbReference>
<dbReference type="Ensembl" id="ENST00000527614.6">
    <molecule id="P30154-1"/>
    <property type="protein sequence ID" value="ENSP00000437193.1"/>
    <property type="gene ID" value="ENSG00000137713.16"/>
</dbReference>
<dbReference type="GeneID" id="5519"/>
<dbReference type="KEGG" id="hsa:5519"/>
<dbReference type="MANE-Select" id="ENST00000527614.6">
    <property type="protein sequence ID" value="ENSP00000437193.1"/>
    <property type="RefSeq nucleotide sequence ID" value="NM_002716.5"/>
    <property type="RefSeq protein sequence ID" value="NP_002707.3"/>
</dbReference>
<dbReference type="UCSC" id="uc001plw.2">
    <molecule id="P30154-1"/>
    <property type="organism name" value="human"/>
</dbReference>
<dbReference type="AGR" id="HGNC:9303"/>
<dbReference type="CTD" id="5519"/>
<dbReference type="DisGeNET" id="5519"/>
<dbReference type="GeneCards" id="PPP2R1B"/>
<dbReference type="HGNC" id="HGNC:9303">
    <property type="gene designation" value="PPP2R1B"/>
</dbReference>
<dbReference type="HPA" id="ENSG00000137713">
    <property type="expression patterns" value="Tissue enhanced (liver)"/>
</dbReference>
<dbReference type="MalaCards" id="PPP2R1B"/>
<dbReference type="MIM" id="603113">
    <property type="type" value="gene"/>
</dbReference>
<dbReference type="neXtProt" id="NX_P30154"/>
<dbReference type="OpenTargets" id="ENSG00000137713"/>
<dbReference type="PharmGKB" id="PA33667"/>
<dbReference type="VEuPathDB" id="HostDB:ENSG00000137713"/>
<dbReference type="eggNOG" id="KOG0211">
    <property type="taxonomic scope" value="Eukaryota"/>
</dbReference>
<dbReference type="GeneTree" id="ENSGT00950000183066"/>
<dbReference type="HOGENOM" id="CLU_015533_2_1_1"/>
<dbReference type="InParanoid" id="P30154"/>
<dbReference type="OMA" id="NRVEAMQ"/>
<dbReference type="OrthoDB" id="340346at2759"/>
<dbReference type="PAN-GO" id="P30154">
    <property type="GO annotations" value="4 GO annotations based on evolutionary models"/>
</dbReference>
<dbReference type="PhylomeDB" id="P30154"/>
<dbReference type="TreeFam" id="TF105552"/>
<dbReference type="PathwayCommons" id="P30154"/>
<dbReference type="Reactome" id="R-HSA-113501">
    <property type="pathway name" value="Inhibition of replication initiation of damaged DNA by RB1/E2F1"/>
</dbReference>
<dbReference type="Reactome" id="R-HSA-141444">
    <property type="pathway name" value="Amplification of signal from unattached kinetochores via a MAD2 inhibitory signal"/>
</dbReference>
<dbReference type="Reactome" id="R-HSA-163685">
    <property type="pathway name" value="Integration of energy metabolism"/>
</dbReference>
<dbReference type="Reactome" id="R-HSA-163767">
    <property type="pathway name" value="PP2A-mediated dephosphorylation of key metabolic factors"/>
</dbReference>
<dbReference type="Reactome" id="R-HSA-180024">
    <property type="pathway name" value="DARPP-32 events"/>
</dbReference>
<dbReference type="Reactome" id="R-HSA-195253">
    <property type="pathway name" value="Degradation of beta-catenin by the destruction complex"/>
</dbReference>
<dbReference type="Reactome" id="R-HSA-196299">
    <property type="pathway name" value="Beta-catenin phosphorylation cascade"/>
</dbReference>
<dbReference type="Reactome" id="R-HSA-198753">
    <property type="pathway name" value="ERK/MAPK targets"/>
</dbReference>
<dbReference type="Reactome" id="R-HSA-202670">
    <property type="pathway name" value="ERKs are inactivated"/>
</dbReference>
<dbReference type="Reactome" id="R-HSA-2465910">
    <property type="pathway name" value="MASTL Facilitates Mitotic Progression"/>
</dbReference>
<dbReference type="Reactome" id="R-HSA-2467813">
    <property type="pathway name" value="Separation of Sister Chromatids"/>
</dbReference>
<dbReference type="Reactome" id="R-HSA-2500257">
    <property type="pathway name" value="Resolution of Sister Chromatid Cohesion"/>
</dbReference>
<dbReference type="Reactome" id="R-HSA-389356">
    <property type="pathway name" value="Co-stimulation by CD28"/>
</dbReference>
<dbReference type="Reactome" id="R-HSA-389513">
    <property type="pathway name" value="Co-inhibition by CTLA4"/>
</dbReference>
<dbReference type="Reactome" id="R-HSA-432142">
    <property type="pathway name" value="Platelet sensitization by LDL"/>
</dbReference>
<dbReference type="Reactome" id="R-HSA-4641262">
    <property type="pathway name" value="Disassembly of the destruction complex and recruitment of AXIN to the membrane"/>
</dbReference>
<dbReference type="Reactome" id="R-HSA-5339716">
    <property type="pathway name" value="Signaling by GSK3beta mutants"/>
</dbReference>
<dbReference type="Reactome" id="R-HSA-5358747">
    <property type="pathway name" value="CTNNB1 S33 mutants aren't phosphorylated"/>
</dbReference>
<dbReference type="Reactome" id="R-HSA-5358749">
    <property type="pathway name" value="CTNNB1 S37 mutants aren't phosphorylated"/>
</dbReference>
<dbReference type="Reactome" id="R-HSA-5358751">
    <property type="pathway name" value="CTNNB1 S45 mutants aren't phosphorylated"/>
</dbReference>
<dbReference type="Reactome" id="R-HSA-5358752">
    <property type="pathway name" value="CTNNB1 T41 mutants aren't phosphorylated"/>
</dbReference>
<dbReference type="Reactome" id="R-HSA-5467337">
    <property type="pathway name" value="APC truncation mutants have impaired AXIN binding"/>
</dbReference>
<dbReference type="Reactome" id="R-HSA-5467340">
    <property type="pathway name" value="AXIN missense mutants destabilize the destruction complex"/>
</dbReference>
<dbReference type="Reactome" id="R-HSA-5467348">
    <property type="pathway name" value="Truncations of AMER1 destabilize the destruction complex"/>
</dbReference>
<dbReference type="Reactome" id="R-HSA-5663220">
    <property type="pathway name" value="RHO GTPases Activate Formins"/>
</dbReference>
<dbReference type="Reactome" id="R-HSA-5673000">
    <property type="pathway name" value="RAF activation"/>
</dbReference>
<dbReference type="Reactome" id="R-HSA-5675221">
    <property type="pathway name" value="Negative regulation of MAPK pathway"/>
</dbReference>
<dbReference type="Reactome" id="R-HSA-6804757">
    <property type="pathway name" value="Regulation of TP53 Degradation"/>
</dbReference>
<dbReference type="Reactome" id="R-HSA-6811558">
    <property type="pathway name" value="PI5P, PP2A and IER3 Regulate PI3K/AKT Signaling"/>
</dbReference>
<dbReference type="Reactome" id="R-HSA-68877">
    <property type="pathway name" value="Mitotic Prometaphase"/>
</dbReference>
<dbReference type="Reactome" id="R-HSA-69231">
    <property type="pathway name" value="Cyclin D associated events in G1"/>
</dbReference>
<dbReference type="Reactome" id="R-HSA-69273">
    <property type="pathway name" value="Cyclin A/B1/B2 associated events during G2/M transition"/>
</dbReference>
<dbReference type="Reactome" id="R-HSA-9634600">
    <property type="pathway name" value="Regulation of glycolysis by fructose 2,6-bisphosphate metabolism"/>
</dbReference>
<dbReference type="Reactome" id="R-HSA-9648025">
    <property type="pathway name" value="EML4 and NUDC in mitotic spindle formation"/>
</dbReference>
<dbReference type="Reactome" id="R-HSA-9833482">
    <property type="pathway name" value="PKR-mediated signaling"/>
</dbReference>
<dbReference type="Reactome" id="R-HSA-9860927">
    <property type="pathway name" value="Turbulent (oscillatory, disturbed) flow shear stress activates signaling by PIEZO1 and integrins in endothelial cells"/>
</dbReference>
<dbReference type="SignaLink" id="P30154"/>
<dbReference type="SIGNOR" id="P30154"/>
<dbReference type="BioGRID-ORCS" id="5519">
    <property type="hits" value="18 hits in 1163 CRISPR screens"/>
</dbReference>
<dbReference type="CD-CODE" id="DEE660B4">
    <property type="entry name" value="Stress granule"/>
</dbReference>
<dbReference type="ChiTaRS" id="PPP2R1B">
    <property type="organism name" value="human"/>
</dbReference>
<dbReference type="GeneWiki" id="PPP2R1B"/>
<dbReference type="GenomeRNAi" id="5519"/>
<dbReference type="Pharos" id="P30154">
    <property type="development level" value="Tbio"/>
</dbReference>
<dbReference type="PRO" id="PR:P30154"/>
<dbReference type="Proteomes" id="UP000005640">
    <property type="component" value="Chromosome 11"/>
</dbReference>
<dbReference type="RNAct" id="P30154">
    <property type="molecule type" value="protein"/>
</dbReference>
<dbReference type="Bgee" id="ENSG00000137713">
    <property type="expression patterns" value="Expressed in sperm and 197 other cell types or tissues"/>
</dbReference>
<dbReference type="ExpressionAtlas" id="P30154">
    <property type="expression patterns" value="baseline and differential"/>
</dbReference>
<dbReference type="GO" id="GO:0005737">
    <property type="term" value="C:cytoplasm"/>
    <property type="evidence" value="ECO:0000318"/>
    <property type="project" value="GO_Central"/>
</dbReference>
<dbReference type="GO" id="GO:0005829">
    <property type="term" value="C:cytosol"/>
    <property type="evidence" value="ECO:0000318"/>
    <property type="project" value="GO_Central"/>
</dbReference>
<dbReference type="GO" id="GO:0070062">
    <property type="term" value="C:extracellular exosome"/>
    <property type="evidence" value="ECO:0007005"/>
    <property type="project" value="UniProtKB"/>
</dbReference>
<dbReference type="GO" id="GO:0045121">
    <property type="term" value="C:membrane raft"/>
    <property type="evidence" value="ECO:0000314"/>
    <property type="project" value="UniProtKB"/>
</dbReference>
<dbReference type="GO" id="GO:0005634">
    <property type="term" value="C:nucleus"/>
    <property type="evidence" value="ECO:0000318"/>
    <property type="project" value="GO_Central"/>
</dbReference>
<dbReference type="GO" id="GO:0000159">
    <property type="term" value="C:protein phosphatase type 2A complex"/>
    <property type="evidence" value="ECO:0000318"/>
    <property type="project" value="GO_Central"/>
</dbReference>
<dbReference type="GO" id="GO:0019888">
    <property type="term" value="F:protein phosphatase regulator activity"/>
    <property type="evidence" value="ECO:0000318"/>
    <property type="project" value="GO_Central"/>
</dbReference>
<dbReference type="GO" id="GO:0060561">
    <property type="term" value="P:apoptotic process involved in morphogenesis"/>
    <property type="evidence" value="ECO:0000315"/>
    <property type="project" value="UniProtKB"/>
</dbReference>
<dbReference type="GO" id="GO:0051754">
    <property type="term" value="P:meiotic sister chromatid cohesion, centromeric"/>
    <property type="evidence" value="ECO:0000318"/>
    <property type="project" value="GO_Central"/>
</dbReference>
<dbReference type="GO" id="GO:2001241">
    <property type="term" value="P:positive regulation of extrinsic apoptotic signaling pathway in absence of ligand"/>
    <property type="evidence" value="ECO:0000315"/>
    <property type="project" value="UniProtKB"/>
</dbReference>
<dbReference type="GO" id="GO:0051225">
    <property type="term" value="P:spindle assembly"/>
    <property type="evidence" value="ECO:0000318"/>
    <property type="project" value="GO_Central"/>
</dbReference>
<dbReference type="FunFam" id="1.25.10.10:FF:000011">
    <property type="entry name" value="Serine/threonine-protein phosphatase 2A regulatory subunit A alpha isoform"/>
    <property type="match status" value="1"/>
</dbReference>
<dbReference type="Gene3D" id="1.25.10.10">
    <property type="entry name" value="Leucine-rich Repeat Variant"/>
    <property type="match status" value="1"/>
</dbReference>
<dbReference type="InterPro" id="IPR011989">
    <property type="entry name" value="ARM-like"/>
</dbReference>
<dbReference type="InterPro" id="IPR016024">
    <property type="entry name" value="ARM-type_fold"/>
</dbReference>
<dbReference type="InterPro" id="IPR000357">
    <property type="entry name" value="HEAT"/>
</dbReference>
<dbReference type="InterPro" id="IPR021133">
    <property type="entry name" value="HEAT_type_2"/>
</dbReference>
<dbReference type="InterPro" id="IPR054573">
    <property type="entry name" value="PP2A/SF3B1-like_HEAT"/>
</dbReference>
<dbReference type="InterPro" id="IPR051023">
    <property type="entry name" value="PP2A_Regulatory_Subunit_A"/>
</dbReference>
<dbReference type="PANTHER" id="PTHR10648">
    <property type="entry name" value="SERINE/THREONINE-PROTEIN PHOSPHATASE PP2A 65 KDA REGULATORY SUBUNIT"/>
    <property type="match status" value="1"/>
</dbReference>
<dbReference type="PANTHER" id="PTHR10648:SF9">
    <property type="entry name" value="SERINE_THREONINE-PROTEIN PHOSPHATASE 2A 65 KDA REGULATORY SUBUNIT A BETA ISOFORM"/>
    <property type="match status" value="1"/>
</dbReference>
<dbReference type="Pfam" id="PF02985">
    <property type="entry name" value="HEAT"/>
    <property type="match status" value="4"/>
</dbReference>
<dbReference type="Pfam" id="PF13646">
    <property type="entry name" value="HEAT_2"/>
    <property type="match status" value="1"/>
</dbReference>
<dbReference type="Pfam" id="PF22646">
    <property type="entry name" value="PPP2R1A-like_HEAT"/>
    <property type="match status" value="1"/>
</dbReference>
<dbReference type="SUPFAM" id="SSF48371">
    <property type="entry name" value="ARM repeat"/>
    <property type="match status" value="1"/>
</dbReference>
<dbReference type="PROSITE" id="PS50077">
    <property type="entry name" value="HEAT_REPEAT"/>
    <property type="match status" value="12"/>
</dbReference>
<proteinExistence type="evidence at protein level"/>
<protein>
    <recommendedName>
        <fullName>Serine/threonine-protein phosphatase 2A 65 kDa regulatory subunit A beta isoform</fullName>
    </recommendedName>
    <alternativeName>
        <fullName>PP2A subunit A isoform PR65-beta</fullName>
    </alternativeName>
    <alternativeName>
        <fullName>PP2A subunit A isoform R1-beta</fullName>
    </alternativeName>
</protein>
<reference key="1">
    <citation type="journal article" date="1998" name="Gene">
        <title>Genomic organization and precise physical location of protein phosphatase 2A regulatory subunit A beta isoform gene on chromosome band 11q23.</title>
        <authorList>
            <person name="Baysal B.E."/>
            <person name="Farr J.E."/>
            <person name="Goss J.R."/>
            <person name="Devlin B."/>
            <person name="Richard C.W. III"/>
        </authorList>
    </citation>
    <scope>NUCLEOTIDE SEQUENCE [GENOMIC DNA]</scope>
</reference>
<reference key="2">
    <citation type="journal article" date="1998" name="Science">
        <title>Alterations of the PPP2R1B gene in human lung and colon cancer.</title>
        <authorList>
            <person name="Wang S.S."/>
            <person name="Esplin E.D."/>
            <person name="Li J.L."/>
            <person name="Huang L."/>
            <person name="Gazdar A."/>
            <person name="Minna J."/>
            <person name="Evans G.A."/>
        </authorList>
    </citation>
    <scope>NUCLEOTIDE SEQUENCE [MRNA] (ISOFORM 1)</scope>
    <scope>VARIANTS ARG-8; SER-65; ASP-90; PRO-101; GLU-343; ALA-448; GLY-504 AND ALA-545</scope>
</reference>
<reference key="3">
    <citation type="journal article" date="2001" name="Eur. J. Hum. Genet.">
        <title>A high-resolution integrated map spanning the SDHD gene at 11q23: a 1.1-Mb BAC contig, a partial transcript map and 15 new repeat polymorphisms in a tumour-suppressor region.</title>
        <authorList>
            <person name="Baysal B.E."/>
            <person name="Willett-Brozick J.E."/>
            <person name="Taschner P.E.M."/>
            <person name="Dauwerse J.G."/>
            <person name="Devilee P."/>
            <person name="Devlin B."/>
        </authorList>
    </citation>
    <scope>NUCLEOTIDE SEQUENCE [MRNA] (ISOFORM 1)</scope>
</reference>
<reference key="4">
    <citation type="journal article" date="2004" name="Nat. Genet.">
        <title>Complete sequencing and characterization of 21,243 full-length human cDNAs.</title>
        <authorList>
            <person name="Ota T."/>
            <person name="Suzuki Y."/>
            <person name="Nishikawa T."/>
            <person name="Otsuki T."/>
            <person name="Sugiyama T."/>
            <person name="Irie R."/>
            <person name="Wakamatsu A."/>
            <person name="Hayashi K."/>
            <person name="Sato H."/>
            <person name="Nagai K."/>
            <person name="Kimura K."/>
            <person name="Makita H."/>
            <person name="Sekine M."/>
            <person name="Obayashi M."/>
            <person name="Nishi T."/>
            <person name="Shibahara T."/>
            <person name="Tanaka T."/>
            <person name="Ishii S."/>
            <person name="Yamamoto J."/>
            <person name="Saito K."/>
            <person name="Kawai Y."/>
            <person name="Isono Y."/>
            <person name="Nakamura Y."/>
            <person name="Nagahari K."/>
            <person name="Murakami K."/>
            <person name="Yasuda T."/>
            <person name="Iwayanagi T."/>
            <person name="Wagatsuma M."/>
            <person name="Shiratori A."/>
            <person name="Sudo H."/>
            <person name="Hosoiri T."/>
            <person name="Kaku Y."/>
            <person name="Kodaira H."/>
            <person name="Kondo H."/>
            <person name="Sugawara M."/>
            <person name="Takahashi M."/>
            <person name="Kanda K."/>
            <person name="Yokoi T."/>
            <person name="Furuya T."/>
            <person name="Kikkawa E."/>
            <person name="Omura Y."/>
            <person name="Abe K."/>
            <person name="Kamihara K."/>
            <person name="Katsuta N."/>
            <person name="Sato K."/>
            <person name="Tanikawa M."/>
            <person name="Yamazaki M."/>
            <person name="Ninomiya K."/>
            <person name="Ishibashi T."/>
            <person name="Yamashita H."/>
            <person name="Murakawa K."/>
            <person name="Fujimori K."/>
            <person name="Tanai H."/>
            <person name="Kimata M."/>
            <person name="Watanabe M."/>
            <person name="Hiraoka S."/>
            <person name="Chiba Y."/>
            <person name="Ishida S."/>
            <person name="Ono Y."/>
            <person name="Takiguchi S."/>
            <person name="Watanabe S."/>
            <person name="Yosida M."/>
            <person name="Hotuta T."/>
            <person name="Kusano J."/>
            <person name="Kanehori K."/>
            <person name="Takahashi-Fujii A."/>
            <person name="Hara H."/>
            <person name="Tanase T.-O."/>
            <person name="Nomura Y."/>
            <person name="Togiya S."/>
            <person name="Komai F."/>
            <person name="Hara R."/>
            <person name="Takeuchi K."/>
            <person name="Arita M."/>
            <person name="Imose N."/>
            <person name="Musashino K."/>
            <person name="Yuuki H."/>
            <person name="Oshima A."/>
            <person name="Sasaki N."/>
            <person name="Aotsuka S."/>
            <person name="Yoshikawa Y."/>
            <person name="Matsunawa H."/>
            <person name="Ichihara T."/>
            <person name="Shiohata N."/>
            <person name="Sano S."/>
            <person name="Moriya S."/>
            <person name="Momiyama H."/>
            <person name="Satoh N."/>
            <person name="Takami S."/>
            <person name="Terashima Y."/>
            <person name="Suzuki O."/>
            <person name="Nakagawa S."/>
            <person name="Senoh A."/>
            <person name="Mizoguchi H."/>
            <person name="Goto Y."/>
            <person name="Shimizu F."/>
            <person name="Wakebe H."/>
            <person name="Hishigaki H."/>
            <person name="Watanabe T."/>
            <person name="Sugiyama A."/>
            <person name="Takemoto M."/>
            <person name="Kawakami B."/>
            <person name="Yamazaki M."/>
            <person name="Watanabe K."/>
            <person name="Kumagai A."/>
            <person name="Itakura S."/>
            <person name="Fukuzumi Y."/>
            <person name="Fujimori Y."/>
            <person name="Komiyama M."/>
            <person name="Tashiro H."/>
            <person name="Tanigami A."/>
            <person name="Fujiwara T."/>
            <person name="Ono T."/>
            <person name="Yamada K."/>
            <person name="Fujii Y."/>
            <person name="Ozaki K."/>
            <person name="Hirao M."/>
            <person name="Ohmori Y."/>
            <person name="Kawabata A."/>
            <person name="Hikiji T."/>
            <person name="Kobatake N."/>
            <person name="Inagaki H."/>
            <person name="Ikema Y."/>
            <person name="Okamoto S."/>
            <person name="Okitani R."/>
            <person name="Kawakami T."/>
            <person name="Noguchi S."/>
            <person name="Itoh T."/>
            <person name="Shigeta K."/>
            <person name="Senba T."/>
            <person name="Matsumura K."/>
            <person name="Nakajima Y."/>
            <person name="Mizuno T."/>
            <person name="Morinaga M."/>
            <person name="Sasaki M."/>
            <person name="Togashi T."/>
            <person name="Oyama M."/>
            <person name="Hata H."/>
            <person name="Watanabe M."/>
            <person name="Komatsu T."/>
            <person name="Mizushima-Sugano J."/>
            <person name="Satoh T."/>
            <person name="Shirai Y."/>
            <person name="Takahashi Y."/>
            <person name="Nakagawa K."/>
            <person name="Okumura K."/>
            <person name="Nagase T."/>
            <person name="Nomura N."/>
            <person name="Kikuchi H."/>
            <person name="Masuho Y."/>
            <person name="Yamashita R."/>
            <person name="Nakai K."/>
            <person name="Yada T."/>
            <person name="Nakamura Y."/>
            <person name="Ohara O."/>
            <person name="Isogai T."/>
            <person name="Sugano S."/>
        </authorList>
    </citation>
    <scope>NUCLEOTIDE SEQUENCE [LARGE SCALE MRNA] (ISOFORMS 3; 4 AND 5)</scope>
    <source>
        <tissue>Brain</tissue>
        <tissue>Testis</tissue>
        <tissue>Thalamus</tissue>
    </source>
</reference>
<reference key="5">
    <citation type="submission" date="2007-02" db="EMBL/GenBank/DDBJ databases">
        <authorList>
            <consortium name="NHLBI resequencing and genotyping service (RS&amp;G)"/>
        </authorList>
    </citation>
    <scope>NUCLEOTIDE SEQUENCE [GENOMIC DNA]</scope>
</reference>
<reference key="6">
    <citation type="journal article" date="2006" name="Nature">
        <title>Human chromosome 11 DNA sequence and analysis including novel gene identification.</title>
        <authorList>
            <person name="Taylor T.D."/>
            <person name="Noguchi H."/>
            <person name="Totoki Y."/>
            <person name="Toyoda A."/>
            <person name="Kuroki Y."/>
            <person name="Dewar K."/>
            <person name="Lloyd C."/>
            <person name="Itoh T."/>
            <person name="Takeda T."/>
            <person name="Kim D.-W."/>
            <person name="She X."/>
            <person name="Barlow K.F."/>
            <person name="Bloom T."/>
            <person name="Bruford E."/>
            <person name="Chang J.L."/>
            <person name="Cuomo C.A."/>
            <person name="Eichler E."/>
            <person name="FitzGerald M.G."/>
            <person name="Jaffe D.B."/>
            <person name="LaButti K."/>
            <person name="Nicol R."/>
            <person name="Park H.-S."/>
            <person name="Seaman C."/>
            <person name="Sougnez C."/>
            <person name="Yang X."/>
            <person name="Zimmer A.R."/>
            <person name="Zody M.C."/>
            <person name="Birren B.W."/>
            <person name="Nusbaum C."/>
            <person name="Fujiyama A."/>
            <person name="Hattori M."/>
            <person name="Rogers J."/>
            <person name="Lander E.S."/>
            <person name="Sakaki Y."/>
        </authorList>
    </citation>
    <scope>NUCLEOTIDE SEQUENCE [LARGE SCALE GENOMIC DNA]</scope>
</reference>
<reference key="7">
    <citation type="submission" date="2005-07" db="EMBL/GenBank/DDBJ databases">
        <authorList>
            <person name="Mural R.J."/>
            <person name="Istrail S."/>
            <person name="Sutton G.G."/>
            <person name="Florea L."/>
            <person name="Halpern A.L."/>
            <person name="Mobarry C.M."/>
            <person name="Lippert R."/>
            <person name="Walenz B."/>
            <person name="Shatkay H."/>
            <person name="Dew I."/>
            <person name="Miller J.R."/>
            <person name="Flanigan M.J."/>
            <person name="Edwards N.J."/>
            <person name="Bolanos R."/>
            <person name="Fasulo D."/>
            <person name="Halldorsson B.V."/>
            <person name="Hannenhalli S."/>
            <person name="Turner R."/>
            <person name="Yooseph S."/>
            <person name="Lu F."/>
            <person name="Nusskern D.R."/>
            <person name="Shue B.C."/>
            <person name="Zheng X.H."/>
            <person name="Zhong F."/>
            <person name="Delcher A.L."/>
            <person name="Huson D.H."/>
            <person name="Kravitz S.A."/>
            <person name="Mouchard L."/>
            <person name="Reinert K."/>
            <person name="Remington K.A."/>
            <person name="Clark A.G."/>
            <person name="Waterman M.S."/>
            <person name="Eichler E.E."/>
            <person name="Adams M.D."/>
            <person name="Hunkapiller M.W."/>
            <person name="Myers E.W."/>
            <person name="Venter J.C."/>
        </authorList>
    </citation>
    <scope>NUCLEOTIDE SEQUENCE [LARGE SCALE GENOMIC DNA]</scope>
</reference>
<reference key="8">
    <citation type="journal article" date="2004" name="Genome Res.">
        <title>The status, quality, and expansion of the NIH full-length cDNA project: the Mammalian Gene Collection (MGC).</title>
        <authorList>
            <consortium name="The MGC Project Team"/>
        </authorList>
    </citation>
    <scope>NUCLEOTIDE SEQUENCE [LARGE SCALE MRNA] (ISOFORM 2)</scope>
    <source>
        <tissue>Testis</tissue>
    </source>
</reference>
<reference key="9">
    <citation type="journal article" date="1990" name="Biochemistry">
        <title>Alpha- and beta-forms of the 65-kDa subunit of protein phosphatase 2A have a similar 39 amino acid repeating structure.</title>
        <authorList>
            <person name="Hemmings B.A."/>
            <person name="Adams-Pearson C."/>
            <person name="Maurer F."/>
            <person name="Mueller P."/>
            <person name="Goris J."/>
            <person name="Merlevede W."/>
            <person name="Hofsteenge J."/>
            <person name="Stone S.R."/>
        </authorList>
    </citation>
    <scope>NUCLEOTIDE SEQUENCE [MRNA] OF 31-601 (ISOFORM 1)</scope>
</reference>
<reference key="10">
    <citation type="journal article" date="2000" name="J. Biol. Chem.">
        <title>Raf-1-associated protein phosphatase 2A as a positive regulator of kinase activation.</title>
        <authorList>
            <person name="Abraham D."/>
            <person name="Podar K."/>
            <person name="Pacher M."/>
            <person name="Kubicek M."/>
            <person name="Welzel N."/>
            <person name="Hemmings B.A."/>
            <person name="Dilworth S.M."/>
            <person name="Mischak H."/>
            <person name="Kolch W."/>
            <person name="Baccarini M."/>
        </authorList>
    </citation>
    <scope>INTERACTION WITH RAF1</scope>
</reference>
<reference key="11">
    <citation type="journal article" date="2003" name="Biochem. Biophys. Res. Commun.">
        <title>Interaction between protein phosphatase 2A and members of the importin beta superfamily.</title>
        <authorList>
            <person name="Lubert E.J."/>
            <person name="Sarge K.D."/>
        </authorList>
    </citation>
    <scope>INTERACTION WITH IPO9</scope>
</reference>
<reference key="12">
    <citation type="journal article" date="2006" name="Nature">
        <title>Shugoshin collaborates with protein phosphatase 2A to protect cohesin.</title>
        <authorList>
            <person name="Kitajima T.S."/>
            <person name="Sakuno T."/>
            <person name="Ishiguro K."/>
            <person name="Iemura S."/>
            <person name="Natsume T."/>
            <person name="Kawashima S.A."/>
            <person name="Watanabe Y."/>
        </authorList>
    </citation>
    <scope>INTERACTION WITH SGO1</scope>
</reference>
<reference key="13">
    <citation type="journal article" date="2011" name="BMC Syst. Biol.">
        <title>Initial characterization of the human central proteome.</title>
        <authorList>
            <person name="Burkard T.R."/>
            <person name="Planyavsky M."/>
            <person name="Kaupe I."/>
            <person name="Breitwieser F.P."/>
            <person name="Buerckstuemmer T."/>
            <person name="Bennett K.L."/>
            <person name="Superti-Furga G."/>
            <person name="Colinge J."/>
        </authorList>
    </citation>
    <scope>IDENTIFICATION BY MASS SPECTROMETRY [LARGE SCALE ANALYSIS]</scope>
</reference>
<reference key="14">
    <citation type="journal article" date="2012" name="Proc. Natl. Acad. Sci. U.S.A.">
        <title>N-terminal acetylome analyses and functional insights of the N-terminal acetyltransferase NatB.</title>
        <authorList>
            <person name="Van Damme P."/>
            <person name="Lasa M."/>
            <person name="Polevoda B."/>
            <person name="Gazquez C."/>
            <person name="Elosegui-Artola A."/>
            <person name="Kim D.S."/>
            <person name="De Juan-Pardo E."/>
            <person name="Demeyer K."/>
            <person name="Hole K."/>
            <person name="Larrea E."/>
            <person name="Timmerman E."/>
            <person name="Prieto J."/>
            <person name="Arnesen T."/>
            <person name="Sherman F."/>
            <person name="Gevaert K."/>
            <person name="Aldabe R."/>
        </authorList>
    </citation>
    <scope>ACETYLATION [LARGE SCALE ANALYSIS] AT ALA-2</scope>
    <scope>CLEAVAGE OF INITIATOR METHIONINE [LARGE SCALE ANALYSIS]</scope>
    <scope>IDENTIFICATION BY MASS SPECTROMETRY [LARGE SCALE ANALYSIS]</scope>
</reference>
<reference key="15">
    <citation type="journal article" date="2014" name="J. Proteomics">
        <title>An enzyme assisted RP-RPLC approach for in-depth analysis of human liver phosphoproteome.</title>
        <authorList>
            <person name="Bian Y."/>
            <person name="Song C."/>
            <person name="Cheng K."/>
            <person name="Dong M."/>
            <person name="Wang F."/>
            <person name="Huang J."/>
            <person name="Sun D."/>
            <person name="Wang L."/>
            <person name="Ye M."/>
            <person name="Zou H."/>
        </authorList>
    </citation>
    <scope>IDENTIFICATION BY MASS SPECTROMETRY [LARGE SCALE ANALYSIS]</scope>
    <source>
        <tissue>Liver</tissue>
    </source>
</reference>
<reference key="16">
    <citation type="journal article" date="1999" name="Oncogene">
        <title>Absence of PPP2R1B gene alterations in primary ovarian cancers.</title>
        <authorList>
            <person name="Campbell I.G."/>
            <person name="Manolitsas T."/>
        </authorList>
    </citation>
    <scope>VARIANT ASP-90</scope>
</reference>
<reference key="17">
    <citation type="journal article" date="2000" name="Gut">
        <title>Alterations of the PPP2R1B gene located at 11q23 in human colorectal cancers.</title>
        <authorList>
            <person name="Takagi Y."/>
            <person name="Futamura M."/>
            <person name="Yamaguchi K."/>
            <person name="Aoki S."/>
            <person name="Takahashi T."/>
            <person name="Saji S."/>
        </authorList>
    </citation>
    <scope>VARIANTS ALA-15; PRO-365; GLU-498; ILE-499 AND GLY-500</scope>
</reference>
<reference key="18">
    <citation type="journal article" date="2002" name="Cancer Genet. Cytogenet.">
        <title>Alterations in the suppressor gene PPP2R1B in parathyroid hyperplasias and adenomas.</title>
        <authorList>
            <person name="Hemmer S."/>
            <person name="Wasenius V.M."/>
            <person name="Haglund C."/>
            <person name="Zhu Y."/>
            <person name="Knuutila S."/>
            <person name="Franssila K."/>
            <person name="Joensuu H."/>
        </authorList>
    </citation>
    <scope>VARIANT ASP-90</scope>
</reference>
<name>2AAB_HUMAN</name>
<keyword id="KW-0007">Acetylation</keyword>
<keyword id="KW-0025">Alternative splicing</keyword>
<keyword id="KW-1267">Proteomics identification</keyword>
<keyword id="KW-1185">Reference proteome</keyword>
<keyword id="KW-0677">Repeat</keyword>
<sequence>MAGASELGTGPGAAGGDGDDSLYPIAVLIDELRNEDVQLRLNSIKKLSTIALALGVERTRSELLPFLTDTIYDEDEVLLALAEQLGNFTGLVGGPDFAHCLLPPLENLATVEETVVRDKAVESLRQISQEHTPVALEAYFVPLVKRLASGDWFTSRTSACGLFSVCYPRASNAVKAEIRQQFRSLCSDDTPMVRRAAASKLGEFAKVLELDSVKSEIVPLFTSLASDEQDSVRLLAVEACVSIAQLLSQDDLETLVMPTLRQAAEDKSWRVRYMVADRFSELQKAMGPKITLNDLIPAFQNLLKDCEAEVRAAAAHKVKELGENLPIEDRETIIMNQILPYIKELVSDTNQHVKSALASVIMGLSTILGKENTIEHLLPLFLAQLKDECPDVRLNIISNLDCVNEVIGIRQLSQSLLPAIVELAEDAKWRVRLAIIEYMPLLAGQLGVEFFDEKLNSLCMAWLVDHVYAIREAATNNLMKLVQKFGTEWAQNTIVPKVLVMANDPNYLHRMTTLFCINALSEACGQEITTKQMLPIVLKMAGDQVANVRFNVAKSLQKIGPILDTNALQGEVKPVLQKLGQDEDMDVKYFAQEAISVLALA</sequence>
<comment type="function">
    <text>The PR65 subunit of protein phosphatase 2A serves as a scaffolding molecule to coordinate the assembly of the catalytic subunit and a variable regulatory B subunit.</text>
</comment>
<comment type="subunit">
    <text evidence="2 5 6">PP2A consists of a common heterodimeric core enzyme, composed of a 36 kDa catalytic subunit (subunit C) and a 65 kDa constant regulatory subunit (PR65 or subunit A), that associates with a variety of regulatory subunits. Proteins that associate with the core dimer include three families of regulatory subunits B (the R2/B/PR55/B55, R3/B''/PR72/PR130/PR59 and R5/B'/B56 families), the 48 kDa variable regulatory subunit, viral proteins, and cell signaling molecules. Interacts with IPO9. Interacts with SGO1. Interacts with RAF1.</text>
</comment>
<comment type="interaction">
    <interactant intactId="EBI-357094">
        <id>P30154</id>
    </interactant>
    <interactant intactId="EBI-712311">
        <id>P67775</id>
        <label>PPP2CA</label>
    </interactant>
    <organismsDiffer>false</organismsDiffer>
    <experiments>9</experiments>
</comment>
<comment type="interaction">
    <interactant intactId="EBI-357094">
        <id>P30154</id>
    </interactant>
    <interactant intactId="EBI-302388">
        <id>P30153</id>
        <label>PPP2R1A</label>
    </interactant>
    <organismsDiffer>false</organismsDiffer>
    <experiments>3</experiments>
</comment>
<comment type="interaction">
    <interactant intactId="EBI-357094">
        <id>P30154</id>
    </interactant>
    <interactant intactId="EBI-1048931">
        <id>P63151</id>
        <label>PPP2R2A</label>
    </interactant>
    <organismsDiffer>false</organismsDiffer>
    <experiments>5</experiments>
</comment>
<comment type="interaction">
    <interactant intactId="EBI-357094">
        <id>P30154</id>
    </interactant>
    <interactant intactId="EBI-641666">
        <id>Q15172</id>
        <label>PPP2R5A</label>
    </interactant>
    <organismsDiffer>false</organismsDiffer>
    <experiments>4</experiments>
</comment>
<comment type="interaction">
    <interactant intactId="EBI-357094">
        <id>P30154</id>
    </interactant>
    <interactant intactId="EBI-1266156">
        <id>Q13362</id>
        <label>PPP2R5C</label>
    </interactant>
    <organismsDiffer>false</organismsDiffer>
    <experiments>2</experiments>
</comment>
<comment type="interaction">
    <interactant intactId="EBI-357094">
        <id>P30154</id>
    </interactant>
    <interactant intactId="EBI-396563">
        <id>Q14738</id>
        <label>PPP2R5D</label>
    </interactant>
    <organismsDiffer>false</organismsDiffer>
    <experiments>3</experiments>
</comment>
<comment type="interaction">
    <interactant intactId="EBI-357094">
        <id>P30154</id>
    </interactant>
    <interactant intactId="EBI-968374">
        <id>Q16537</id>
        <label>PPP2R5E</label>
    </interactant>
    <organismsDiffer>false</organismsDiffer>
    <experiments>3</experiments>
</comment>
<comment type="interaction">
    <interactant intactId="EBI-357094">
        <id>P30154</id>
    </interactant>
    <interactant intactId="EBI-1036803">
        <id>P11233</id>
        <label>RALA</label>
    </interactant>
    <organismsDiffer>false</organismsDiffer>
    <experiments>6</experiments>
</comment>
<comment type="interaction">
    <interactant intactId="EBI-357094">
        <id>P30154</id>
    </interactant>
    <interactant intactId="EBI-79859">
        <id>O08785</id>
        <label>Clock</label>
    </interactant>
    <organismsDiffer>true</organismsDiffer>
    <experiments>2</experiments>
</comment>
<comment type="interaction">
    <interactant intactId="EBI-357094">
        <id>P30154</id>
    </interactant>
    <interactant intactId="EBI-4404185">
        <id>O08722</id>
        <label>Unc5b</label>
    </interactant>
    <organismsDiffer>true</organismsDiffer>
    <experiments>4</experiments>
</comment>
<comment type="interaction">
    <interactant intactId="EBI-11058011">
        <id>P30154-2</id>
    </interactant>
    <interactant intactId="EBI-12593112">
        <id>O75190-2</id>
        <label>DNAJB6</label>
    </interactant>
    <organismsDiffer>false</organismsDiffer>
    <experiments>3</experiments>
</comment>
<comment type="interaction">
    <interactant intactId="EBI-11058011">
        <id>P30154-2</id>
    </interactant>
    <interactant intactId="EBI-948266">
        <id>O14901</id>
        <label>KLF11</label>
    </interactant>
    <organismsDiffer>false</organismsDiffer>
    <experiments>3</experiments>
</comment>
<comment type="alternative products">
    <event type="alternative splicing"/>
    <isoform>
        <id>P30154-1</id>
        <name>1</name>
        <sequence type="displayed"/>
    </isoform>
    <isoform>
        <id>P30154-2</id>
        <name>2</name>
        <sequence type="described" ref="VSP_036460"/>
    </isoform>
    <isoform>
        <id>P30154-3</id>
        <name>3</name>
        <sequence type="described" ref="VSP_043379 VSP_036460"/>
    </isoform>
    <isoform>
        <id>P30154-4</id>
        <name>4</name>
        <sequence type="described" ref="VSP_045275"/>
    </isoform>
    <isoform>
        <id>P30154-5</id>
        <name>5</name>
        <sequence type="described" ref="VSP_046684"/>
    </isoform>
</comment>
<comment type="domain">
    <text>Each HEAT repeat appears to consist of two alpha helices joined by a hydrophilic region, the intrarepeat loop. The repeat units may be arranged laterally to form a rod-like structure.</text>
</comment>
<comment type="similarity">
    <text evidence="10">Belongs to the phosphatase 2A regulatory subunit A family.</text>
</comment>
<comment type="sequence caution" evidence="10">
    <conflict type="miscellaneous discrepancy">
        <sequence resource="EMBL-CDS" id="AAA59983"/>
    </conflict>
    <text>Contaminating sequence. Sequence of unknown origin in the N-terminal part.</text>
</comment>
<comment type="sequence caution" evidence="10">
    <conflict type="frameshift">
        <sequence resource="EMBL-CDS" id="BAG59103"/>
    </conflict>
</comment>
<gene>
    <name type="primary">PPP2R1B</name>
</gene>
<evidence type="ECO:0000269" key="1">
    <source>
    </source>
</evidence>
<evidence type="ECO:0000269" key="2">
    <source>
    </source>
</evidence>
<evidence type="ECO:0000269" key="3">
    <source>
    </source>
</evidence>
<evidence type="ECO:0000269" key="4">
    <source>
    </source>
</evidence>
<evidence type="ECO:0000269" key="5">
    <source>
    </source>
</evidence>
<evidence type="ECO:0000269" key="6">
    <source>
    </source>
</evidence>
<evidence type="ECO:0000269" key="7">
    <source>
    </source>
</evidence>
<evidence type="ECO:0000303" key="8">
    <source>
    </source>
</evidence>
<evidence type="ECO:0000303" key="9">
    <source>
    </source>
</evidence>
<evidence type="ECO:0000305" key="10"/>
<evidence type="ECO:0007744" key="11">
    <source>
    </source>
</evidence>
<accession>P30154</accession>
<accession>A8MY67</accession>
<accession>B0YJ69</accession>
<accession>B4DGQ6</accession>
<accession>B4DK91</accession>
<accession>B4DWW5</accession>
<accession>F8W8G1</accession>
<accession>O75620</accession>
<accession>Q8NHV8</accession>